<feature type="chain" id="PRO_0000214159" description="Enhancer of polycomb-like protein 1">
    <location>
        <begin position="1"/>
        <end position="846"/>
    </location>
</feature>
<feature type="region of interest" description="Disordered" evidence="3">
    <location>
        <begin position="169"/>
        <end position="204"/>
    </location>
</feature>
<feature type="region of interest" description="Disordered" evidence="3">
    <location>
        <begin position="391"/>
        <end position="466"/>
    </location>
</feature>
<feature type="region of interest" description="Disordered" evidence="3">
    <location>
        <begin position="587"/>
        <end position="607"/>
    </location>
</feature>
<feature type="region of interest" description="Disordered" evidence="3">
    <location>
        <begin position="682"/>
        <end position="702"/>
    </location>
</feature>
<feature type="region of interest" description="Disordered" evidence="3">
    <location>
        <begin position="759"/>
        <end position="804"/>
    </location>
</feature>
<feature type="coiled-coil region" evidence="2">
    <location>
        <begin position="434"/>
        <end position="490"/>
    </location>
</feature>
<feature type="compositionally biased region" description="Basic and acidic residues" evidence="3">
    <location>
        <begin position="180"/>
        <end position="203"/>
    </location>
</feature>
<feature type="compositionally biased region" description="Polar residues" evidence="3">
    <location>
        <begin position="411"/>
        <end position="426"/>
    </location>
</feature>
<feature type="compositionally biased region" description="Basic and acidic residues" evidence="3">
    <location>
        <begin position="432"/>
        <end position="452"/>
    </location>
</feature>
<feature type="compositionally biased region" description="Pro residues" evidence="3">
    <location>
        <begin position="686"/>
        <end position="702"/>
    </location>
</feature>
<feature type="compositionally biased region" description="Low complexity" evidence="3">
    <location>
        <begin position="759"/>
        <end position="773"/>
    </location>
</feature>
<feature type="compositionally biased region" description="Polar residues" evidence="3">
    <location>
        <begin position="783"/>
        <end position="796"/>
    </location>
</feature>
<keyword id="KW-0131">Cell cycle</keyword>
<keyword id="KW-0175">Coiled coil</keyword>
<keyword id="KW-0227">DNA damage</keyword>
<keyword id="KW-0234">DNA repair</keyword>
<keyword id="KW-0539">Nucleus</keyword>
<keyword id="KW-1185">Reference proteome</keyword>
<keyword id="KW-0804">Transcription</keyword>
<keyword id="KW-0805">Transcription regulation</keyword>
<reference key="1">
    <citation type="journal article" date="2005" name="Science">
        <title>The genome of the basidiomycetous yeast and human pathogen Cryptococcus neoformans.</title>
        <authorList>
            <person name="Loftus B.J."/>
            <person name="Fung E."/>
            <person name="Roncaglia P."/>
            <person name="Rowley D."/>
            <person name="Amedeo P."/>
            <person name="Bruno D."/>
            <person name="Vamathevan J."/>
            <person name="Miranda M."/>
            <person name="Anderson I.J."/>
            <person name="Fraser J.A."/>
            <person name="Allen J.E."/>
            <person name="Bosdet I.E."/>
            <person name="Brent M.R."/>
            <person name="Chiu R."/>
            <person name="Doering T.L."/>
            <person name="Donlin M.J."/>
            <person name="D'Souza C.A."/>
            <person name="Fox D.S."/>
            <person name="Grinberg V."/>
            <person name="Fu J."/>
            <person name="Fukushima M."/>
            <person name="Haas B.J."/>
            <person name="Huang J.C."/>
            <person name="Janbon G."/>
            <person name="Jones S.J.M."/>
            <person name="Koo H.L."/>
            <person name="Krzywinski M.I."/>
            <person name="Kwon-Chung K.J."/>
            <person name="Lengeler K.B."/>
            <person name="Maiti R."/>
            <person name="Marra M.A."/>
            <person name="Marra R.E."/>
            <person name="Mathewson C.A."/>
            <person name="Mitchell T.G."/>
            <person name="Pertea M."/>
            <person name="Riggs F.R."/>
            <person name="Salzberg S.L."/>
            <person name="Schein J.E."/>
            <person name="Shvartsbeyn A."/>
            <person name="Shin H."/>
            <person name="Shumway M."/>
            <person name="Specht C.A."/>
            <person name="Suh B.B."/>
            <person name="Tenney A."/>
            <person name="Utterback T.R."/>
            <person name="Wickes B.L."/>
            <person name="Wortman J.R."/>
            <person name="Wye N.H."/>
            <person name="Kronstad J.W."/>
            <person name="Lodge J.K."/>
            <person name="Heitman J."/>
            <person name="Davis R.W."/>
            <person name="Fraser C.M."/>
            <person name="Hyman R.W."/>
        </authorList>
    </citation>
    <scope>NUCLEOTIDE SEQUENCE [LARGE SCALE GENOMIC DNA]</scope>
    <source>
        <strain>JEC21 / ATCC MYA-565</strain>
    </source>
</reference>
<organism>
    <name type="scientific">Cryptococcus neoformans var. neoformans serotype D (strain JEC21 / ATCC MYA-565)</name>
    <name type="common">Filobasidiella neoformans</name>
    <dbReference type="NCBI Taxonomy" id="214684"/>
    <lineage>
        <taxon>Eukaryota</taxon>
        <taxon>Fungi</taxon>
        <taxon>Dikarya</taxon>
        <taxon>Basidiomycota</taxon>
        <taxon>Agaricomycotina</taxon>
        <taxon>Tremellomycetes</taxon>
        <taxon>Tremellales</taxon>
        <taxon>Cryptococcaceae</taxon>
        <taxon>Cryptococcus</taxon>
        <taxon>Cryptococcus neoformans species complex</taxon>
    </lineage>
</organism>
<accession>P0CN58</accession>
<accession>Q55HM9</accession>
<accession>Q5K767</accession>
<gene>
    <name type="primary">EPL1</name>
    <name type="ordered locus">CNN00920</name>
</gene>
<sequence length="846" mass="95384">MVAPGRMVTSSRRIGRVTNKTKLIIYRGSDKVDTSAAETVLWDQEAGGAGKDSNKHQHIGATGVESGELLEHHLQAALSSASLLHSSNKPSSPKSVKEAPAAALNYHIPTPDATGLVSDTVFSQLYQRTKYVEPYNFIRFSDTVEESSCGWGGLGYCMDDADERWLNDFNSKAEGSSGDVKSDKEQGRGMRVKGKDREKEKGDAPAPLVISEDMFEYIMGVFEKYTEENAPMLHTDLSLLPPFSAVENMFSTPISPAFLPSNEIPKELGDLKACARMARNVYPHWKSRREQRQGKSILPQLNYDETNDNDPYVCFRRRDIRATRKTRRTDNFSIEQFQKLQFELRSAHALADRVLTREREKKSLYEAEKELWEARWKFFETKRRWPSLGMTSDEEHKITGRPTIVPPIQIPSLSGQTPLTSGQSSSHMRKRTDKDREERAQRERYDAQRNAERSGILSGRSNAPDALKERLQALQQKTEEMLARKKEQDAHWDDSIDSPYQPLPPSNSVHAFRSLFVLDPCRAQCKDSETGNEILHPESFRIRRGRGGIVRLDRRTSIYSHRRGIQPTSPSEYPTWLFPDIAPRRSEKKRPRSIDEVEEEMQEQSPKVMRKDLNETWRYDVDRGGAVGVGMGLEEDYDRVIIDDLEAKYIRHRISLLQESDCAKLRPDNYILDQTREALDAAADAKPPPAPIFQKPPAPQPNPQLLAAHLQQQQMLAQQQQMEQFQRFQLMAQQQAMAQAQAQAQAQAQAQAQAQAQAQVQAQGQGHPQAHLQTHPQGVPQPNGVNSPMPNGQQMLPPSDGVKQLKLPPHAVARLGAAMANANANANGGLHVLQQQQQQHAQTSQQ</sequence>
<protein>
    <recommendedName>
        <fullName>Enhancer of polycomb-like protein 1</fullName>
    </recommendedName>
</protein>
<name>EPL1_CRYNJ</name>
<dbReference type="EMBL" id="AE017356">
    <property type="protein sequence ID" value="AAW47131.1"/>
    <property type="molecule type" value="Genomic_DNA"/>
</dbReference>
<dbReference type="RefSeq" id="XP_568648.1">
    <property type="nucleotide sequence ID" value="XM_568648.1"/>
</dbReference>
<dbReference type="FunCoup" id="P0CN58">
    <property type="interactions" value="311"/>
</dbReference>
<dbReference type="STRING" id="214684.P0CN58"/>
<dbReference type="PaxDb" id="214684-P0CN58"/>
<dbReference type="EnsemblFungi" id="AAW47131">
    <property type="protein sequence ID" value="AAW47131"/>
    <property type="gene ID" value="CNN00920"/>
</dbReference>
<dbReference type="GeneID" id="3255463"/>
<dbReference type="KEGG" id="cne:CNN00920"/>
<dbReference type="VEuPathDB" id="FungiDB:CNN00920"/>
<dbReference type="eggNOG" id="KOG2261">
    <property type="taxonomic scope" value="Eukaryota"/>
</dbReference>
<dbReference type="HOGENOM" id="CLU_336162_0_0_1"/>
<dbReference type="InParanoid" id="P0CN58"/>
<dbReference type="OMA" id="IYYMDER"/>
<dbReference type="OrthoDB" id="435275at2759"/>
<dbReference type="Proteomes" id="UP000002149">
    <property type="component" value="Chromosome 14"/>
</dbReference>
<dbReference type="GO" id="GO:0035267">
    <property type="term" value="C:NuA4 histone acetyltransferase complex"/>
    <property type="evidence" value="ECO:0007669"/>
    <property type="project" value="InterPro"/>
</dbReference>
<dbReference type="GO" id="GO:0005634">
    <property type="term" value="C:nucleus"/>
    <property type="evidence" value="ECO:0007669"/>
    <property type="project" value="UniProtKB-SubCell"/>
</dbReference>
<dbReference type="GO" id="GO:0032777">
    <property type="term" value="C:piccolo histone acetyltransferase complex"/>
    <property type="evidence" value="ECO:0000318"/>
    <property type="project" value="GO_Central"/>
</dbReference>
<dbReference type="GO" id="GO:0006281">
    <property type="term" value="P:DNA repair"/>
    <property type="evidence" value="ECO:0007669"/>
    <property type="project" value="UniProtKB-KW"/>
</dbReference>
<dbReference type="GO" id="GO:0006357">
    <property type="term" value="P:regulation of transcription by RNA polymerase II"/>
    <property type="evidence" value="ECO:0000318"/>
    <property type="project" value="GO_Central"/>
</dbReference>
<dbReference type="InterPro" id="IPR024943">
    <property type="entry name" value="Enhancer_polycomb"/>
</dbReference>
<dbReference type="InterPro" id="IPR019542">
    <property type="entry name" value="Enhancer_polycomb-like_N"/>
</dbReference>
<dbReference type="PANTHER" id="PTHR14898">
    <property type="entry name" value="ENHANCER OF POLYCOMB"/>
    <property type="match status" value="1"/>
</dbReference>
<dbReference type="Pfam" id="PF10513">
    <property type="entry name" value="EPL1"/>
    <property type="match status" value="1"/>
</dbReference>
<evidence type="ECO:0000250" key="1"/>
<evidence type="ECO:0000255" key="2"/>
<evidence type="ECO:0000256" key="3">
    <source>
        <dbReference type="SAM" id="MobiDB-lite"/>
    </source>
</evidence>
<evidence type="ECO:0000305" key="4"/>
<comment type="function">
    <text evidence="1">Component of the NuA4 histone acetyltransferase complex which is involved in transcriptional activation of selected genes principally by acetylation of nucleosomal histone H4 and H2A. The NuA4 complex is also involved in DNA repair. Involved in gene silencing by neighboring heterochromatin, blockage of the silencing spreading along the chromosome, and required for cell cycle progression through G2/M (By similarity).</text>
</comment>
<comment type="subunit">
    <text evidence="1">Component of the NuA4 histone acetyltransferase complex.</text>
</comment>
<comment type="subcellular location">
    <subcellularLocation>
        <location evidence="1">Nucleus</location>
    </subcellularLocation>
</comment>
<comment type="similarity">
    <text evidence="4">Belongs to the enhancer of polycomb family.</text>
</comment>
<proteinExistence type="inferred from homology"/>